<gene>
    <name evidence="1" type="primary">hisA</name>
    <name type="ordered locus">CLD_2982</name>
</gene>
<name>HIS4_CLOBK</name>
<dbReference type="EC" id="5.3.1.16" evidence="1"/>
<dbReference type="EMBL" id="CP000939">
    <property type="protein sequence ID" value="ACA44483.1"/>
    <property type="molecule type" value="Genomic_DNA"/>
</dbReference>
<dbReference type="RefSeq" id="WP_004451726.1">
    <property type="nucleotide sequence ID" value="NC_010516.1"/>
</dbReference>
<dbReference type="SMR" id="B1ILA8"/>
<dbReference type="KEGG" id="cbb:CLD_2982"/>
<dbReference type="HOGENOM" id="CLU_048577_1_2_9"/>
<dbReference type="UniPathway" id="UPA00031">
    <property type="reaction ID" value="UER00009"/>
</dbReference>
<dbReference type="Proteomes" id="UP000008541">
    <property type="component" value="Chromosome"/>
</dbReference>
<dbReference type="GO" id="GO:0005737">
    <property type="term" value="C:cytoplasm"/>
    <property type="evidence" value="ECO:0007669"/>
    <property type="project" value="UniProtKB-SubCell"/>
</dbReference>
<dbReference type="GO" id="GO:0003949">
    <property type="term" value="F:1-(5-phosphoribosyl)-5-[(5-phosphoribosylamino)methylideneamino]imidazole-4-carboxamide isomerase activity"/>
    <property type="evidence" value="ECO:0007669"/>
    <property type="project" value="UniProtKB-UniRule"/>
</dbReference>
<dbReference type="GO" id="GO:0000105">
    <property type="term" value="P:L-histidine biosynthetic process"/>
    <property type="evidence" value="ECO:0007669"/>
    <property type="project" value="UniProtKB-UniRule"/>
</dbReference>
<dbReference type="GO" id="GO:0000162">
    <property type="term" value="P:L-tryptophan biosynthetic process"/>
    <property type="evidence" value="ECO:0007669"/>
    <property type="project" value="TreeGrafter"/>
</dbReference>
<dbReference type="CDD" id="cd04732">
    <property type="entry name" value="HisA"/>
    <property type="match status" value="1"/>
</dbReference>
<dbReference type="FunFam" id="3.20.20.70:FF:000009">
    <property type="entry name" value="1-(5-phosphoribosyl)-5-[(5-phosphoribosylamino)methylideneamino] imidazole-4-carboxamide isomerase"/>
    <property type="match status" value="1"/>
</dbReference>
<dbReference type="Gene3D" id="3.20.20.70">
    <property type="entry name" value="Aldolase class I"/>
    <property type="match status" value="1"/>
</dbReference>
<dbReference type="HAMAP" id="MF_01014">
    <property type="entry name" value="HisA"/>
    <property type="match status" value="1"/>
</dbReference>
<dbReference type="InterPro" id="IPR013785">
    <property type="entry name" value="Aldolase_TIM"/>
</dbReference>
<dbReference type="InterPro" id="IPR006062">
    <property type="entry name" value="His_biosynth"/>
</dbReference>
<dbReference type="InterPro" id="IPR006063">
    <property type="entry name" value="HisA_bact_arch"/>
</dbReference>
<dbReference type="InterPro" id="IPR044524">
    <property type="entry name" value="Isoase_HisA-like"/>
</dbReference>
<dbReference type="InterPro" id="IPR023016">
    <property type="entry name" value="Isoase_HisA-like_bact"/>
</dbReference>
<dbReference type="InterPro" id="IPR011060">
    <property type="entry name" value="RibuloseP-bd_barrel"/>
</dbReference>
<dbReference type="NCBIfam" id="TIGR00007">
    <property type="entry name" value="1-(5-phosphoribosyl)-5-[(5-phosphoribosylamino)methylideneamino]imidazole-4-carboxamide isomerase"/>
    <property type="match status" value="1"/>
</dbReference>
<dbReference type="PANTHER" id="PTHR43090">
    <property type="entry name" value="1-(5-PHOSPHORIBOSYL)-5-[(5-PHOSPHORIBOSYLAMINO)METHYLIDENEAMINO] IMIDAZOLE-4-CARBOXAMIDE ISOMERASE"/>
    <property type="match status" value="1"/>
</dbReference>
<dbReference type="PANTHER" id="PTHR43090:SF2">
    <property type="entry name" value="1-(5-PHOSPHORIBOSYL)-5-[(5-PHOSPHORIBOSYLAMINO)METHYLIDENEAMINO] IMIDAZOLE-4-CARBOXAMIDE ISOMERASE"/>
    <property type="match status" value="1"/>
</dbReference>
<dbReference type="Pfam" id="PF00977">
    <property type="entry name" value="His_biosynth"/>
    <property type="match status" value="1"/>
</dbReference>
<dbReference type="SUPFAM" id="SSF51366">
    <property type="entry name" value="Ribulose-phoshate binding barrel"/>
    <property type="match status" value="1"/>
</dbReference>
<accession>B1ILA8</accession>
<organism>
    <name type="scientific">Clostridium botulinum (strain Okra / Type B1)</name>
    <dbReference type="NCBI Taxonomy" id="498213"/>
    <lineage>
        <taxon>Bacteria</taxon>
        <taxon>Bacillati</taxon>
        <taxon>Bacillota</taxon>
        <taxon>Clostridia</taxon>
        <taxon>Eubacteriales</taxon>
        <taxon>Clostridiaceae</taxon>
        <taxon>Clostridium</taxon>
    </lineage>
</organism>
<feature type="chain" id="PRO_1000135097" description="1-(5-phosphoribosyl)-5-[(5-phosphoribosylamino)methylideneamino] imidazole-4-carboxamide isomerase">
    <location>
        <begin position="1"/>
        <end position="242"/>
    </location>
</feature>
<feature type="active site" description="Proton acceptor" evidence="1">
    <location>
        <position position="8"/>
    </location>
</feature>
<feature type="active site" description="Proton donor" evidence="1">
    <location>
        <position position="129"/>
    </location>
</feature>
<keyword id="KW-0028">Amino-acid biosynthesis</keyword>
<keyword id="KW-0963">Cytoplasm</keyword>
<keyword id="KW-0368">Histidine biosynthesis</keyword>
<keyword id="KW-0413">Isomerase</keyword>
<comment type="catalytic activity">
    <reaction evidence="1">
        <text>1-(5-phospho-beta-D-ribosyl)-5-[(5-phospho-beta-D-ribosylamino)methylideneamino]imidazole-4-carboxamide = 5-[(5-phospho-1-deoxy-D-ribulos-1-ylimino)methylamino]-1-(5-phospho-beta-D-ribosyl)imidazole-4-carboxamide</text>
        <dbReference type="Rhea" id="RHEA:15469"/>
        <dbReference type="ChEBI" id="CHEBI:58435"/>
        <dbReference type="ChEBI" id="CHEBI:58525"/>
        <dbReference type="EC" id="5.3.1.16"/>
    </reaction>
</comment>
<comment type="pathway">
    <text evidence="1">Amino-acid biosynthesis; L-histidine biosynthesis; L-histidine from 5-phospho-alpha-D-ribose 1-diphosphate: step 4/9.</text>
</comment>
<comment type="subcellular location">
    <subcellularLocation>
        <location evidence="1">Cytoplasm</location>
    </subcellularLocation>
</comment>
<comment type="similarity">
    <text evidence="1">Belongs to the HisA/HisF family.</text>
</comment>
<evidence type="ECO:0000255" key="1">
    <source>
        <dbReference type="HAMAP-Rule" id="MF_01014"/>
    </source>
</evidence>
<proteinExistence type="inferred from homology"/>
<protein>
    <recommendedName>
        <fullName evidence="1">1-(5-phosphoribosyl)-5-[(5-phosphoribosylamino)methylideneamino] imidazole-4-carboxamide isomerase</fullName>
        <ecNumber evidence="1">5.3.1.16</ecNumber>
    </recommendedName>
    <alternativeName>
        <fullName evidence="1">Phosphoribosylformimino-5-aminoimidazole carboxamide ribotide isomerase</fullName>
    </alternativeName>
</protein>
<sequence length="242" mass="26395">MIILPAIDLKEGKCVRLYQGDFKASKVVAEDPIEVALKFKENGAEYIHIVDLDGALTGQIKNLSIISSIIKTINIPVELGGGIRNLNTIDMLIDAGIERVILGTAALNNRGLVEKAVKKYDKKIAIGIDAKNEKVAINGWLNISSTNYIDFAKEMEKIGIRNIIFTDISKDGTLKGPNLNQLKKLNESVSCNIIASGGIKDIEDLKVIKEMDIYGAIVGKAIYSGNIDLNEAIKIINKESSR</sequence>
<reference key="1">
    <citation type="journal article" date="2007" name="PLoS ONE">
        <title>Analysis of the neurotoxin complex genes in Clostridium botulinum A1-A4 and B1 strains: BoNT/A3, /Ba4 and /B1 clusters are located within plasmids.</title>
        <authorList>
            <person name="Smith T.J."/>
            <person name="Hill K.K."/>
            <person name="Foley B.T."/>
            <person name="Detter J.C."/>
            <person name="Munk A.C."/>
            <person name="Bruce D.C."/>
            <person name="Doggett N.A."/>
            <person name="Smith L.A."/>
            <person name="Marks J.D."/>
            <person name="Xie G."/>
            <person name="Brettin T.S."/>
        </authorList>
    </citation>
    <scope>NUCLEOTIDE SEQUENCE [LARGE SCALE GENOMIC DNA]</scope>
    <source>
        <strain>Okra / Type B1</strain>
    </source>
</reference>